<sequence>MSLPALQNSAVFYRRIINRFPQDFSLAFAYGSAVFRQTGSSQGHMVKNMLDFVFAVDDPVTWHTMNLIENRKHYSFLRFLGPKQISSIQSDYGAGVYFNTLVPAEDRLIKYGVISTDALIDDLLHWKTLYVAGRLHKPVRILLQSENGNLRSALLGNLKSAVIASFLMLPESFSEEELYLQIAGLSYSGDFRMVFGEDKSKVSNIVKDNMQHFRQLYNRILQECPQVVYKPQQGRLEVDKSPEGQFTQLMALPRTLQQQITRLVDRPGKNRDVEEILLQVAQDPDCGSVVQQGISSIVKSSSITQSAKGIATAGLVKTVSYSTKKLQKMWRGWRRKPA</sequence>
<protein>
    <recommendedName>
        <fullName>Phosphatidate cytidylyltransferase, mitochondrial</fullName>
        <ecNumber evidence="1">2.7.7.41</ecNumber>
    </recommendedName>
    <alternativeName>
        <fullName>CDP-diacylglycerol synthase</fullName>
        <shortName>CDP-DAG synthase</shortName>
    </alternativeName>
    <alternativeName>
        <fullName>Mitochondrial translocator assembly and maintenance protein 41 homolog</fullName>
        <shortName>TAM41</shortName>
    </alternativeName>
</protein>
<name>TAM41_DANRE</name>
<feature type="chain" id="PRO_0000248356" description="Phosphatidate cytidylyltransferase, mitochondrial">
    <location>
        <begin position="1"/>
        <end position="338"/>
    </location>
</feature>
<gene>
    <name type="primary">tamm41</name>
    <name type="ORF">zgc:123195</name>
</gene>
<accession>Q3B7H2</accession>
<keyword id="KW-0444">Lipid biosynthesis</keyword>
<keyword id="KW-0443">Lipid metabolism</keyword>
<keyword id="KW-0460">Magnesium</keyword>
<keyword id="KW-0472">Membrane</keyword>
<keyword id="KW-0496">Mitochondrion</keyword>
<keyword id="KW-0999">Mitochondrion inner membrane</keyword>
<keyword id="KW-0548">Nucleotidyltransferase</keyword>
<keyword id="KW-0594">Phospholipid biosynthesis</keyword>
<keyword id="KW-1208">Phospholipid metabolism</keyword>
<keyword id="KW-1185">Reference proteome</keyword>
<keyword id="KW-0808">Transferase</keyword>
<comment type="function">
    <text evidence="1">Catalyzes the conversion of phosphatidic acid (PA) to CDP-diacylglycerol (CDP-DAG), an essential intermediate in the synthesis of phosphatidylglycerol, cardiolipin and phosphatidylinositol.</text>
</comment>
<comment type="catalytic activity">
    <reaction evidence="1">
        <text>a 1,2-diacyl-sn-glycero-3-phosphate + CTP + H(+) = a CDP-1,2-diacyl-sn-glycerol + diphosphate</text>
        <dbReference type="Rhea" id="RHEA:16229"/>
        <dbReference type="ChEBI" id="CHEBI:15378"/>
        <dbReference type="ChEBI" id="CHEBI:33019"/>
        <dbReference type="ChEBI" id="CHEBI:37563"/>
        <dbReference type="ChEBI" id="CHEBI:58332"/>
        <dbReference type="ChEBI" id="CHEBI:58608"/>
        <dbReference type="EC" id="2.7.7.41"/>
    </reaction>
    <physiologicalReaction direction="left-to-right" evidence="1">
        <dbReference type="Rhea" id="RHEA:16230"/>
    </physiologicalReaction>
</comment>
<comment type="cofactor">
    <cofactor evidence="2">
        <name>Mg(2+)</name>
        <dbReference type="ChEBI" id="CHEBI:18420"/>
    </cofactor>
</comment>
<comment type="pathway">
    <text evidence="1">Phospholipid metabolism; CDP-diacylglycerol biosynthesis; CDP-diacylglycerol from sn-glycerol 3-phosphate: step 3/3.</text>
</comment>
<comment type="subcellular location">
    <subcellularLocation>
        <location evidence="1">Mitochondrion inner membrane</location>
        <topology evidence="1">Peripheral membrane protein</topology>
        <orientation evidence="2">Matrix side</orientation>
    </subcellularLocation>
</comment>
<comment type="similarity">
    <text evidence="3">Belongs to the TAM41 family.</text>
</comment>
<evidence type="ECO:0000250" key="1">
    <source>
        <dbReference type="UniProtKB" id="D3ZKT0"/>
    </source>
</evidence>
<evidence type="ECO:0000250" key="2">
    <source>
        <dbReference type="UniProtKB" id="P53230"/>
    </source>
</evidence>
<evidence type="ECO:0000305" key="3"/>
<reference key="1">
    <citation type="submission" date="2005-10" db="EMBL/GenBank/DDBJ databases">
        <authorList>
            <consortium name="NIH - Zebrafish Gene Collection (ZGC) project"/>
        </authorList>
    </citation>
    <scope>NUCLEOTIDE SEQUENCE [LARGE SCALE MRNA]</scope>
    <source>
        <tissue>Embryo</tissue>
    </source>
</reference>
<dbReference type="EC" id="2.7.7.41" evidence="1"/>
<dbReference type="EMBL" id="BC107608">
    <property type="protein sequence ID" value="AAI07609.1"/>
    <property type="molecule type" value="mRNA"/>
</dbReference>
<dbReference type="RefSeq" id="NP_001032196.1">
    <property type="nucleotide sequence ID" value="NM_001037119.1"/>
</dbReference>
<dbReference type="SMR" id="Q3B7H2"/>
<dbReference type="FunCoup" id="Q3B7H2">
    <property type="interactions" value="1826"/>
</dbReference>
<dbReference type="STRING" id="7955.ENSDARP00000140867"/>
<dbReference type="PaxDb" id="7955-ENSDARP00000058668"/>
<dbReference type="GeneID" id="641323"/>
<dbReference type="KEGG" id="dre:641323"/>
<dbReference type="AGR" id="ZFIN:ZDB-GENE-051030-99"/>
<dbReference type="CTD" id="132001"/>
<dbReference type="ZFIN" id="ZDB-GENE-051030-99">
    <property type="gene designation" value="tamm41"/>
</dbReference>
<dbReference type="eggNOG" id="KOG2986">
    <property type="taxonomic scope" value="Eukaryota"/>
</dbReference>
<dbReference type="InParanoid" id="Q3B7H2"/>
<dbReference type="OrthoDB" id="341477at2759"/>
<dbReference type="PhylomeDB" id="Q3B7H2"/>
<dbReference type="BRENDA" id="2.7.7.41">
    <property type="organism ID" value="928"/>
</dbReference>
<dbReference type="UniPathway" id="UPA00557">
    <property type="reaction ID" value="UER00614"/>
</dbReference>
<dbReference type="PRO" id="PR:Q3B7H2"/>
<dbReference type="Proteomes" id="UP000000437">
    <property type="component" value="Chromosome 11"/>
</dbReference>
<dbReference type="GO" id="GO:0005743">
    <property type="term" value="C:mitochondrial inner membrane"/>
    <property type="evidence" value="ECO:0000250"/>
    <property type="project" value="UniProtKB"/>
</dbReference>
<dbReference type="GO" id="GO:0005739">
    <property type="term" value="C:mitochondrion"/>
    <property type="evidence" value="ECO:0000318"/>
    <property type="project" value="GO_Central"/>
</dbReference>
<dbReference type="GO" id="GO:0004605">
    <property type="term" value="F:phosphatidate cytidylyltransferase activity"/>
    <property type="evidence" value="ECO:0000250"/>
    <property type="project" value="UniProtKB"/>
</dbReference>
<dbReference type="GO" id="GO:0032049">
    <property type="term" value="P:cardiolipin biosynthetic process"/>
    <property type="evidence" value="ECO:0000250"/>
    <property type="project" value="UniProtKB"/>
</dbReference>
<dbReference type="GO" id="GO:0016024">
    <property type="term" value="P:CDP-diacylglycerol biosynthetic process"/>
    <property type="evidence" value="ECO:0000318"/>
    <property type="project" value="GO_Central"/>
</dbReference>
<dbReference type="InterPro" id="IPR015222">
    <property type="entry name" value="Tam41"/>
</dbReference>
<dbReference type="PANTHER" id="PTHR13619">
    <property type="entry name" value="PHOSPHATIDATE CYTIDYLYLTRANSFERASE, MITOCHONDRIAL"/>
    <property type="match status" value="1"/>
</dbReference>
<dbReference type="PANTHER" id="PTHR13619:SF0">
    <property type="entry name" value="PHOSPHATIDATE CYTIDYLYLTRANSFERASE, MITOCHONDRIAL"/>
    <property type="match status" value="1"/>
</dbReference>
<dbReference type="Pfam" id="PF09139">
    <property type="entry name" value="Tam41_Mmp37"/>
    <property type="match status" value="1"/>
</dbReference>
<dbReference type="PIRSF" id="PIRSF028840">
    <property type="entry name" value="Mmp37"/>
    <property type="match status" value="1"/>
</dbReference>
<proteinExistence type="evidence at transcript level"/>
<organism>
    <name type="scientific">Danio rerio</name>
    <name type="common">Zebrafish</name>
    <name type="synonym">Brachydanio rerio</name>
    <dbReference type="NCBI Taxonomy" id="7955"/>
    <lineage>
        <taxon>Eukaryota</taxon>
        <taxon>Metazoa</taxon>
        <taxon>Chordata</taxon>
        <taxon>Craniata</taxon>
        <taxon>Vertebrata</taxon>
        <taxon>Euteleostomi</taxon>
        <taxon>Actinopterygii</taxon>
        <taxon>Neopterygii</taxon>
        <taxon>Teleostei</taxon>
        <taxon>Ostariophysi</taxon>
        <taxon>Cypriniformes</taxon>
        <taxon>Danionidae</taxon>
        <taxon>Danioninae</taxon>
        <taxon>Danio</taxon>
    </lineage>
</organism>